<protein>
    <recommendedName>
        <fullName evidence="1">FMN-dependent NADH:quinone oxidoreductase</fullName>
        <ecNumber evidence="1">1.6.5.-</ecNumber>
    </recommendedName>
    <alternativeName>
        <fullName evidence="1">Azo-dye reductase</fullName>
    </alternativeName>
    <alternativeName>
        <fullName evidence="1">FMN-dependent NADH-azo compound oxidoreductase</fullName>
    </alternativeName>
    <alternativeName>
        <fullName evidence="1">FMN-dependent NADH-azoreductase</fullName>
        <ecNumber evidence="1">1.7.1.17</ecNumber>
    </alternativeName>
</protein>
<reference key="1">
    <citation type="journal article" date="2009" name="J. Bacteriol.">
        <title>Complete genome sequence of Rhodobacter sphaeroides KD131.</title>
        <authorList>
            <person name="Lim S.-K."/>
            <person name="Kim S.J."/>
            <person name="Cha S.H."/>
            <person name="Oh Y.-K."/>
            <person name="Rhee H.-J."/>
            <person name="Kim M.-S."/>
            <person name="Lee J.K."/>
        </authorList>
    </citation>
    <scope>NUCLEOTIDE SEQUENCE [LARGE SCALE GENOMIC DNA]</scope>
    <source>
        <strain>KD131 / KCTC 12085</strain>
    </source>
</reference>
<sequence>MTTILRIDSSIKGEAAVSRRLTQRILDRLLEAHPDATVVSRDLAQGIRQIDGSWLGSVFTAPEQRTADQQEIARTADAVMAEVKEADILVIALPVYNFGAPAQLKSWVDHIARRGESFVYTETGPVGLLTGKRAIVAFTSDGTPLGSELDHASGWLRQVLGFVGITDVDFVAADRMVFGADEAMARAEAAVAALAA</sequence>
<evidence type="ECO:0000255" key="1">
    <source>
        <dbReference type="HAMAP-Rule" id="MF_01216"/>
    </source>
</evidence>
<dbReference type="EC" id="1.6.5.-" evidence="1"/>
<dbReference type="EC" id="1.7.1.17" evidence="1"/>
<dbReference type="EMBL" id="CP001151">
    <property type="protein sequence ID" value="ACM03824.1"/>
    <property type="molecule type" value="Genomic_DNA"/>
</dbReference>
<dbReference type="RefSeq" id="WP_015922934.1">
    <property type="nucleotide sequence ID" value="NC_011958.1"/>
</dbReference>
<dbReference type="SMR" id="B9KUU6"/>
<dbReference type="GeneID" id="67449232"/>
<dbReference type="KEGG" id="rsk:RSKD131_3964"/>
<dbReference type="HOGENOM" id="CLU_088964_0_0_5"/>
<dbReference type="GO" id="GO:0009055">
    <property type="term" value="F:electron transfer activity"/>
    <property type="evidence" value="ECO:0007669"/>
    <property type="project" value="UniProtKB-UniRule"/>
</dbReference>
<dbReference type="GO" id="GO:0010181">
    <property type="term" value="F:FMN binding"/>
    <property type="evidence" value="ECO:0007669"/>
    <property type="project" value="UniProtKB-UniRule"/>
</dbReference>
<dbReference type="GO" id="GO:0016652">
    <property type="term" value="F:oxidoreductase activity, acting on NAD(P)H as acceptor"/>
    <property type="evidence" value="ECO:0007669"/>
    <property type="project" value="UniProtKB-UniRule"/>
</dbReference>
<dbReference type="GO" id="GO:0016655">
    <property type="term" value="F:oxidoreductase activity, acting on NAD(P)H, quinone or similar compound as acceptor"/>
    <property type="evidence" value="ECO:0007669"/>
    <property type="project" value="InterPro"/>
</dbReference>
<dbReference type="Gene3D" id="3.40.50.360">
    <property type="match status" value="1"/>
</dbReference>
<dbReference type="HAMAP" id="MF_01216">
    <property type="entry name" value="Azoreductase_type1"/>
    <property type="match status" value="1"/>
</dbReference>
<dbReference type="InterPro" id="IPR003680">
    <property type="entry name" value="Flavodoxin_fold"/>
</dbReference>
<dbReference type="InterPro" id="IPR029039">
    <property type="entry name" value="Flavoprotein-like_sf"/>
</dbReference>
<dbReference type="InterPro" id="IPR050104">
    <property type="entry name" value="FMN-dep_NADH:Q_OxRdtase_AzoR1"/>
</dbReference>
<dbReference type="InterPro" id="IPR023048">
    <property type="entry name" value="NADH:quinone_OxRdtase_FMN_depd"/>
</dbReference>
<dbReference type="PANTHER" id="PTHR43741">
    <property type="entry name" value="FMN-DEPENDENT NADH-AZOREDUCTASE 1"/>
    <property type="match status" value="1"/>
</dbReference>
<dbReference type="PANTHER" id="PTHR43741:SF2">
    <property type="entry name" value="FMN-DEPENDENT NADH:QUINONE OXIDOREDUCTASE"/>
    <property type="match status" value="1"/>
</dbReference>
<dbReference type="Pfam" id="PF02525">
    <property type="entry name" value="Flavodoxin_2"/>
    <property type="match status" value="1"/>
</dbReference>
<dbReference type="SUPFAM" id="SSF52218">
    <property type="entry name" value="Flavoproteins"/>
    <property type="match status" value="1"/>
</dbReference>
<gene>
    <name evidence="1" type="primary">azoR</name>
    <name type="ordered locus">RSKD131_3964</name>
</gene>
<proteinExistence type="inferred from homology"/>
<name>AZOR_CERSK</name>
<accession>B9KUU6</accession>
<keyword id="KW-0285">Flavoprotein</keyword>
<keyword id="KW-0288">FMN</keyword>
<keyword id="KW-0520">NAD</keyword>
<keyword id="KW-0560">Oxidoreductase</keyword>
<organism>
    <name type="scientific">Cereibacter sphaeroides (strain KD131 / KCTC 12085)</name>
    <name type="common">Rhodobacter sphaeroides</name>
    <dbReference type="NCBI Taxonomy" id="557760"/>
    <lineage>
        <taxon>Bacteria</taxon>
        <taxon>Pseudomonadati</taxon>
        <taxon>Pseudomonadota</taxon>
        <taxon>Alphaproteobacteria</taxon>
        <taxon>Rhodobacterales</taxon>
        <taxon>Paracoccaceae</taxon>
        <taxon>Cereibacter</taxon>
    </lineage>
</organism>
<feature type="chain" id="PRO_1000164764" description="FMN-dependent NADH:quinone oxidoreductase">
    <location>
        <begin position="1"/>
        <end position="196"/>
    </location>
</feature>
<feature type="binding site" evidence="1">
    <location>
        <position position="10"/>
    </location>
    <ligand>
        <name>FMN</name>
        <dbReference type="ChEBI" id="CHEBI:58210"/>
    </ligand>
</feature>
<comment type="function">
    <text evidence="1">Quinone reductase that provides resistance to thiol-specific stress caused by electrophilic quinones.</text>
</comment>
<comment type="function">
    <text evidence="1">Also exhibits azoreductase activity. Catalyzes the reductive cleavage of the azo bond in aromatic azo compounds to the corresponding amines.</text>
</comment>
<comment type="catalytic activity">
    <reaction evidence="1">
        <text>2 a quinone + NADH + H(+) = 2 a 1,4-benzosemiquinone + NAD(+)</text>
        <dbReference type="Rhea" id="RHEA:65952"/>
        <dbReference type="ChEBI" id="CHEBI:15378"/>
        <dbReference type="ChEBI" id="CHEBI:57540"/>
        <dbReference type="ChEBI" id="CHEBI:57945"/>
        <dbReference type="ChEBI" id="CHEBI:132124"/>
        <dbReference type="ChEBI" id="CHEBI:134225"/>
    </reaction>
</comment>
<comment type="catalytic activity">
    <reaction evidence="1">
        <text>N,N-dimethyl-1,4-phenylenediamine + anthranilate + 2 NAD(+) = 2-(4-dimethylaminophenyl)diazenylbenzoate + 2 NADH + 2 H(+)</text>
        <dbReference type="Rhea" id="RHEA:55872"/>
        <dbReference type="ChEBI" id="CHEBI:15378"/>
        <dbReference type="ChEBI" id="CHEBI:15783"/>
        <dbReference type="ChEBI" id="CHEBI:16567"/>
        <dbReference type="ChEBI" id="CHEBI:57540"/>
        <dbReference type="ChEBI" id="CHEBI:57945"/>
        <dbReference type="ChEBI" id="CHEBI:71579"/>
        <dbReference type="EC" id="1.7.1.17"/>
    </reaction>
</comment>
<comment type="cofactor">
    <cofactor evidence="1">
        <name>FMN</name>
        <dbReference type="ChEBI" id="CHEBI:58210"/>
    </cofactor>
    <text evidence="1">Binds 1 FMN per subunit.</text>
</comment>
<comment type="subunit">
    <text evidence="1">Homodimer.</text>
</comment>
<comment type="similarity">
    <text evidence="1">Belongs to the azoreductase type 1 family.</text>
</comment>